<protein>
    <recommendedName>
        <fullName>Mimecan</fullName>
    </recommendedName>
    <alternativeName>
        <fullName>Osteoglycin</fullName>
    </alternativeName>
</protein>
<comment type="function">
    <text evidence="1">Induces bone formation in conjunction with TGF-beta-1 or TGF-beta-2.</text>
</comment>
<comment type="subcellular location">
    <subcellularLocation>
        <location evidence="2">Secreted</location>
        <location evidence="2">Extracellular space</location>
        <location evidence="2">Extracellular matrix</location>
    </subcellularLocation>
</comment>
<comment type="developmental stage">
    <text>Levels decrease at each developmental time point and further decrease during maturation into adulthood.</text>
</comment>
<comment type="PTM">
    <text>The composition of the N-linked chains or the substitution of the N-linked sites is different between embryonic and adult tissues.</text>
</comment>
<comment type="PTM">
    <text evidence="1">Contains keratan sulfate.</text>
</comment>
<comment type="similarity">
    <text evidence="4">Belongs to the small leucine-rich proteoglycan (SLRP) family. SLRP class III subfamily.</text>
</comment>
<name>MIME_CHICK</name>
<organism>
    <name type="scientific">Gallus gallus</name>
    <name type="common">Chicken</name>
    <dbReference type="NCBI Taxonomy" id="9031"/>
    <lineage>
        <taxon>Eukaryota</taxon>
        <taxon>Metazoa</taxon>
        <taxon>Chordata</taxon>
        <taxon>Craniata</taxon>
        <taxon>Vertebrata</taxon>
        <taxon>Euteleostomi</taxon>
        <taxon>Archelosauria</taxon>
        <taxon>Archosauria</taxon>
        <taxon>Dinosauria</taxon>
        <taxon>Saurischia</taxon>
        <taxon>Theropoda</taxon>
        <taxon>Coelurosauria</taxon>
        <taxon>Aves</taxon>
        <taxon>Neognathae</taxon>
        <taxon>Galloanserae</taxon>
        <taxon>Galliformes</taxon>
        <taxon>Phasianidae</taxon>
        <taxon>Phasianinae</taxon>
        <taxon>Gallus</taxon>
    </lineage>
</organism>
<proteinExistence type="evidence at transcript level"/>
<evidence type="ECO:0000250" key="1">
    <source>
        <dbReference type="UniProtKB" id="P19879"/>
    </source>
</evidence>
<evidence type="ECO:0000250" key="2">
    <source>
        <dbReference type="UniProtKB" id="Q8MJF1"/>
    </source>
</evidence>
<evidence type="ECO:0000255" key="3"/>
<evidence type="ECO:0000305" key="4"/>
<dbReference type="EMBL" id="AF126963">
    <property type="protein sequence ID" value="AAD21085.1"/>
    <property type="molecule type" value="mRNA"/>
</dbReference>
<dbReference type="RefSeq" id="NP_989540.1">
    <property type="nucleotide sequence ID" value="NM_204209.2"/>
</dbReference>
<dbReference type="SMR" id="Q9W6H0"/>
<dbReference type="FunCoup" id="Q9W6H0">
    <property type="interactions" value="911"/>
</dbReference>
<dbReference type="STRING" id="9031.ENSGALP00000043060"/>
<dbReference type="GlyCosmos" id="Q9W6H0">
    <property type="glycosylation" value="3 sites, No reported glycans"/>
</dbReference>
<dbReference type="GlyGen" id="Q9W6H0">
    <property type="glycosylation" value="3 sites"/>
</dbReference>
<dbReference type="PaxDb" id="9031-ENSGALP00000043060"/>
<dbReference type="Ensembl" id="ENSGALT00010065952.1">
    <property type="protein sequence ID" value="ENSGALP00010040218.1"/>
    <property type="gene ID" value="ENSGALG00010027205.1"/>
</dbReference>
<dbReference type="GeneID" id="374039"/>
<dbReference type="KEGG" id="gga:374039"/>
<dbReference type="CTD" id="4969"/>
<dbReference type="VEuPathDB" id="HostDB:geneid_374039"/>
<dbReference type="eggNOG" id="KOG0619">
    <property type="taxonomic scope" value="Eukaryota"/>
</dbReference>
<dbReference type="GeneTree" id="ENSGT00940000157238"/>
<dbReference type="HOGENOM" id="CLU_067583_1_0_1"/>
<dbReference type="InParanoid" id="Q9W6H0"/>
<dbReference type="OMA" id="RIIHLQF"/>
<dbReference type="OrthoDB" id="7451790at2759"/>
<dbReference type="PhylomeDB" id="Q9W6H0"/>
<dbReference type="TreeFam" id="TF351924"/>
<dbReference type="Reactome" id="R-GGA-2022854">
    <property type="pathway name" value="Keratan sulfate biosynthesis"/>
</dbReference>
<dbReference type="Reactome" id="R-GGA-2022857">
    <property type="pathway name" value="Keratan sulfate degradation"/>
</dbReference>
<dbReference type="PRO" id="PR:Q9W6H0"/>
<dbReference type="Proteomes" id="UP000000539">
    <property type="component" value="Chromosome 12"/>
</dbReference>
<dbReference type="Bgee" id="ENSGALG00000026736">
    <property type="expression patterns" value="Expressed in colon and 11 other cell types or tissues"/>
</dbReference>
<dbReference type="GO" id="GO:0031012">
    <property type="term" value="C:extracellular matrix"/>
    <property type="evidence" value="ECO:0000318"/>
    <property type="project" value="GO_Central"/>
</dbReference>
<dbReference type="GO" id="GO:0005576">
    <property type="term" value="C:extracellular region"/>
    <property type="evidence" value="ECO:0007669"/>
    <property type="project" value="UniProtKB-KW"/>
</dbReference>
<dbReference type="GO" id="GO:0008083">
    <property type="term" value="F:growth factor activity"/>
    <property type="evidence" value="ECO:0007669"/>
    <property type="project" value="UniProtKB-KW"/>
</dbReference>
<dbReference type="GO" id="GO:0061975">
    <property type="term" value="P:articular cartilage development"/>
    <property type="evidence" value="ECO:0000318"/>
    <property type="project" value="GO_Central"/>
</dbReference>
<dbReference type="GO" id="GO:0060348">
    <property type="term" value="P:bone development"/>
    <property type="evidence" value="ECO:0000318"/>
    <property type="project" value="GO_Central"/>
</dbReference>
<dbReference type="Gene3D" id="3.80.10.10">
    <property type="entry name" value="Ribonuclease Inhibitor"/>
    <property type="match status" value="1"/>
</dbReference>
<dbReference type="InterPro" id="IPR001611">
    <property type="entry name" value="Leu-rich_rpt"/>
</dbReference>
<dbReference type="InterPro" id="IPR003591">
    <property type="entry name" value="Leu-rich_rpt_typical-subtyp"/>
</dbReference>
<dbReference type="InterPro" id="IPR032675">
    <property type="entry name" value="LRR_dom_sf"/>
</dbReference>
<dbReference type="InterPro" id="IPR043547">
    <property type="entry name" value="Mimecan/Epiphycan/Opticin"/>
</dbReference>
<dbReference type="PANTHER" id="PTHR46269">
    <property type="entry name" value="EPIPHYCAN-RELATED"/>
    <property type="match status" value="1"/>
</dbReference>
<dbReference type="PANTHER" id="PTHR46269:SF1">
    <property type="entry name" value="MIMECAN"/>
    <property type="match status" value="1"/>
</dbReference>
<dbReference type="Pfam" id="PF00560">
    <property type="entry name" value="LRR_1"/>
    <property type="match status" value="1"/>
</dbReference>
<dbReference type="Pfam" id="PF13855">
    <property type="entry name" value="LRR_8"/>
    <property type="match status" value="1"/>
</dbReference>
<dbReference type="SMART" id="SM00369">
    <property type="entry name" value="LRR_TYP"/>
    <property type="match status" value="4"/>
</dbReference>
<dbReference type="SUPFAM" id="SSF52058">
    <property type="entry name" value="L domain-like"/>
    <property type="match status" value="1"/>
</dbReference>
<dbReference type="PROSITE" id="PS51450">
    <property type="entry name" value="LRR"/>
    <property type="match status" value="4"/>
</dbReference>
<keyword id="KW-1015">Disulfide bond</keyword>
<keyword id="KW-0272">Extracellular matrix</keyword>
<keyword id="KW-0325">Glycoprotein</keyword>
<keyword id="KW-0339">Growth factor</keyword>
<keyword id="KW-0433">Leucine-rich repeat</keyword>
<keyword id="KW-0654">Proteoglycan</keyword>
<keyword id="KW-1185">Reference proteome</keyword>
<keyword id="KW-0677">Repeat</keyword>
<keyword id="KW-0964">Secreted</keyword>
<keyword id="KW-0732">Signal</keyword>
<sequence>MKTLQAAFFLVAFVPLVKPAPPIQQDSPKFYEYVDADFATGSLIQQDYEMLPKDTIKDGTNVSLDTALRLQADDSELSARPTKDTNLPTCLLCVCLSGSVYCEEIDIEAVPPLPKETAYLYARFNKIKRIAVSDFADITTLRRIDFSGNMIEEIEDGAFSKLLLLEELSLAENRLVKLPVLPPKLTTFNANQNRIKSRGIKNNAFKKLTNLAYLYLGHNALESVPLNLPESLRILHLQHNNITTINDDTFCKSNNTRYIRTRMDEIRMEGNPILLAKHVNAFSCLRTLPVGTYY</sequence>
<feature type="signal peptide" evidence="3">
    <location>
        <begin position="1"/>
        <end position="19"/>
    </location>
</feature>
<feature type="chain" id="PRO_0000032762" description="Mimecan">
    <location>
        <begin position="20"/>
        <end position="294"/>
    </location>
</feature>
<feature type="repeat" description="LRR 1">
    <location>
        <begin position="108"/>
        <end position="127"/>
    </location>
</feature>
<feature type="repeat" description="LRR 2">
    <location>
        <begin position="128"/>
        <end position="151"/>
    </location>
</feature>
<feature type="repeat" description="LRR 3">
    <location>
        <begin position="152"/>
        <end position="175"/>
    </location>
</feature>
<feature type="repeat" description="LRR 4">
    <location>
        <begin position="176"/>
        <end position="195"/>
    </location>
</feature>
<feature type="repeat" description="LRR 5">
    <location>
        <begin position="196"/>
        <end position="221"/>
    </location>
</feature>
<feature type="repeat" description="LRR 6">
    <location>
        <begin position="222"/>
        <end position="242"/>
    </location>
</feature>
<feature type="repeat" description="LRR 7">
    <location>
        <begin position="243"/>
        <end position="273"/>
    </location>
</feature>
<feature type="glycosylation site" description="N-linked (GlcNAc...) asparagine" evidence="3">
    <location>
        <position position="61"/>
    </location>
</feature>
<feature type="glycosylation site" description="N-linked (GlcNAc...) asparagine" evidence="3">
    <location>
        <position position="241"/>
    </location>
</feature>
<feature type="glycosylation site" description="N-linked (GlcNAc...) asparagine" evidence="3">
    <location>
        <position position="254"/>
    </location>
</feature>
<feature type="disulfide bond" evidence="1">
    <location>
        <begin position="251"/>
        <end position="284"/>
    </location>
</feature>
<gene>
    <name type="primary">OGN</name>
</gene>
<accession>Q9W6H0</accession>
<reference key="1">
    <citation type="journal article" date="2000" name="Exp. Eye Res.">
        <title>Expression of the keratan sulfate proteoglycans lumican, keratocan and osteoglycin/mimecan during chick corneal development.</title>
        <authorList>
            <person name="Dunlevy J.R."/>
            <person name="Beales M.P."/>
            <person name="Berryhill B.L."/>
            <person name="Cornuet P.K."/>
            <person name="Hassell J.R."/>
        </authorList>
    </citation>
    <scope>NUCLEOTIDE SEQUENCE [MRNA]</scope>
    <source>
        <tissue>Cornea</tissue>
    </source>
</reference>